<accession>C3LQ26</accession>
<feature type="chain" id="PRO_1000124116" description="1-deoxy-D-xylulose 5-phosphate reductoisomerase">
    <location>
        <begin position="1"/>
        <end position="402"/>
    </location>
</feature>
<feature type="binding site" evidence="1">
    <location>
        <position position="10"/>
    </location>
    <ligand>
        <name>NADPH</name>
        <dbReference type="ChEBI" id="CHEBI:57783"/>
    </ligand>
</feature>
<feature type="binding site" evidence="1">
    <location>
        <position position="11"/>
    </location>
    <ligand>
        <name>NADPH</name>
        <dbReference type="ChEBI" id="CHEBI:57783"/>
    </ligand>
</feature>
<feature type="binding site" evidence="1">
    <location>
        <position position="12"/>
    </location>
    <ligand>
        <name>NADPH</name>
        <dbReference type="ChEBI" id="CHEBI:57783"/>
    </ligand>
</feature>
<feature type="binding site" evidence="1">
    <location>
        <position position="13"/>
    </location>
    <ligand>
        <name>NADPH</name>
        <dbReference type="ChEBI" id="CHEBI:57783"/>
    </ligand>
</feature>
<feature type="binding site" evidence="1">
    <location>
        <position position="36"/>
    </location>
    <ligand>
        <name>NADPH</name>
        <dbReference type="ChEBI" id="CHEBI:57783"/>
    </ligand>
</feature>
<feature type="binding site" evidence="1">
    <location>
        <position position="38"/>
    </location>
    <ligand>
        <name>NADPH</name>
        <dbReference type="ChEBI" id="CHEBI:57783"/>
    </ligand>
</feature>
<feature type="binding site" evidence="1">
    <location>
        <position position="124"/>
    </location>
    <ligand>
        <name>NADPH</name>
        <dbReference type="ChEBI" id="CHEBI:57783"/>
    </ligand>
</feature>
<feature type="binding site" evidence="1">
    <location>
        <position position="125"/>
    </location>
    <ligand>
        <name>1-deoxy-D-xylulose 5-phosphate</name>
        <dbReference type="ChEBI" id="CHEBI:57792"/>
    </ligand>
</feature>
<feature type="binding site" evidence="1">
    <location>
        <position position="126"/>
    </location>
    <ligand>
        <name>NADPH</name>
        <dbReference type="ChEBI" id="CHEBI:57783"/>
    </ligand>
</feature>
<feature type="binding site" evidence="1">
    <location>
        <position position="150"/>
    </location>
    <ligand>
        <name>Mn(2+)</name>
        <dbReference type="ChEBI" id="CHEBI:29035"/>
    </ligand>
</feature>
<feature type="binding site" evidence="1">
    <location>
        <position position="151"/>
    </location>
    <ligand>
        <name>1-deoxy-D-xylulose 5-phosphate</name>
        <dbReference type="ChEBI" id="CHEBI:57792"/>
    </ligand>
</feature>
<feature type="binding site" evidence="1">
    <location>
        <position position="152"/>
    </location>
    <ligand>
        <name>1-deoxy-D-xylulose 5-phosphate</name>
        <dbReference type="ChEBI" id="CHEBI:57792"/>
    </ligand>
</feature>
<feature type="binding site" evidence="1">
    <location>
        <position position="152"/>
    </location>
    <ligand>
        <name>Mn(2+)</name>
        <dbReference type="ChEBI" id="CHEBI:29035"/>
    </ligand>
</feature>
<feature type="binding site" evidence="1">
    <location>
        <position position="186"/>
    </location>
    <ligand>
        <name>1-deoxy-D-xylulose 5-phosphate</name>
        <dbReference type="ChEBI" id="CHEBI:57792"/>
    </ligand>
</feature>
<feature type="binding site" evidence="1">
    <location>
        <position position="209"/>
    </location>
    <ligand>
        <name>1-deoxy-D-xylulose 5-phosphate</name>
        <dbReference type="ChEBI" id="CHEBI:57792"/>
    </ligand>
</feature>
<feature type="binding site" evidence="1">
    <location>
        <position position="215"/>
    </location>
    <ligand>
        <name>NADPH</name>
        <dbReference type="ChEBI" id="CHEBI:57783"/>
    </ligand>
</feature>
<feature type="binding site" evidence="1">
    <location>
        <position position="222"/>
    </location>
    <ligand>
        <name>1-deoxy-D-xylulose 5-phosphate</name>
        <dbReference type="ChEBI" id="CHEBI:57792"/>
    </ligand>
</feature>
<feature type="binding site" evidence="1">
    <location>
        <position position="227"/>
    </location>
    <ligand>
        <name>1-deoxy-D-xylulose 5-phosphate</name>
        <dbReference type="ChEBI" id="CHEBI:57792"/>
    </ligand>
</feature>
<feature type="binding site" evidence="1">
    <location>
        <position position="228"/>
    </location>
    <ligand>
        <name>1-deoxy-D-xylulose 5-phosphate</name>
        <dbReference type="ChEBI" id="CHEBI:57792"/>
    </ligand>
</feature>
<feature type="binding site" evidence="1">
    <location>
        <position position="231"/>
    </location>
    <ligand>
        <name>1-deoxy-D-xylulose 5-phosphate</name>
        <dbReference type="ChEBI" id="CHEBI:57792"/>
    </ligand>
</feature>
<feature type="binding site" evidence="1">
    <location>
        <position position="231"/>
    </location>
    <ligand>
        <name>Mn(2+)</name>
        <dbReference type="ChEBI" id="CHEBI:29035"/>
    </ligand>
</feature>
<gene>
    <name evidence="1" type="primary">dxr</name>
    <name type="ordered locus">VCM66_2177</name>
</gene>
<sequence>MRKLTILGATGSIGASTLKVIAQNPQQFSIVALVAGVNVAKMYQLCQQWRPKYAVMATASAASELQGLLKNQAMATEVLYGEEAMCQVAALDDVDTVMAAIVGAAGLLPTMAAVKAGKRVLLANKEALVMSGQLFIDAVAQSGAELMPVDSEHNAIFQCLPTEIQTQLGRCDLSQHGIDHILLTGSGGPFRYSDLATLDSVTPEQAIAHPNWSMGPKISVDSATMMNKGLEYIEAKWLFNTSREQLKVLIHPQSVIHSMVQYQDGSVIAQLGEPDMATPISYAMAYPERVTAGVPALDFTRLQQLTFMEVDFARYPCLQLAMDACFLGQHATTSLNAANEVAVDAFLKRKIRFTDIALINDQVLSKVCATNTQLHCRDLESLLELDTMARHFAHQVLKERQA</sequence>
<comment type="function">
    <text evidence="1">Catalyzes the NADPH-dependent rearrangement and reduction of 1-deoxy-D-xylulose-5-phosphate (DXP) to 2-C-methyl-D-erythritol 4-phosphate (MEP).</text>
</comment>
<comment type="catalytic activity">
    <reaction evidence="1">
        <text>2-C-methyl-D-erythritol 4-phosphate + NADP(+) = 1-deoxy-D-xylulose 5-phosphate + NADPH + H(+)</text>
        <dbReference type="Rhea" id="RHEA:13717"/>
        <dbReference type="ChEBI" id="CHEBI:15378"/>
        <dbReference type="ChEBI" id="CHEBI:57783"/>
        <dbReference type="ChEBI" id="CHEBI:57792"/>
        <dbReference type="ChEBI" id="CHEBI:58262"/>
        <dbReference type="ChEBI" id="CHEBI:58349"/>
        <dbReference type="EC" id="1.1.1.267"/>
    </reaction>
    <physiologicalReaction direction="right-to-left" evidence="1">
        <dbReference type="Rhea" id="RHEA:13719"/>
    </physiologicalReaction>
</comment>
<comment type="cofactor">
    <cofactor evidence="1">
        <name>Mg(2+)</name>
        <dbReference type="ChEBI" id="CHEBI:18420"/>
    </cofactor>
    <cofactor evidence="1">
        <name>Mn(2+)</name>
        <dbReference type="ChEBI" id="CHEBI:29035"/>
    </cofactor>
</comment>
<comment type="pathway">
    <text evidence="1">Isoprenoid biosynthesis; isopentenyl diphosphate biosynthesis via DXP pathway; isopentenyl diphosphate from 1-deoxy-D-xylulose 5-phosphate: step 1/6.</text>
</comment>
<comment type="similarity">
    <text evidence="1">Belongs to the DXR family.</text>
</comment>
<evidence type="ECO:0000255" key="1">
    <source>
        <dbReference type="HAMAP-Rule" id="MF_00183"/>
    </source>
</evidence>
<reference key="1">
    <citation type="journal article" date="2008" name="PLoS ONE">
        <title>A recalibrated molecular clock and independent origins for the cholera pandemic clones.</title>
        <authorList>
            <person name="Feng L."/>
            <person name="Reeves P.R."/>
            <person name="Lan R."/>
            <person name="Ren Y."/>
            <person name="Gao C."/>
            <person name="Zhou Z."/>
            <person name="Ren Y."/>
            <person name="Cheng J."/>
            <person name="Wang W."/>
            <person name="Wang J."/>
            <person name="Qian W."/>
            <person name="Li D."/>
            <person name="Wang L."/>
        </authorList>
    </citation>
    <scope>NUCLEOTIDE SEQUENCE [LARGE SCALE GENOMIC DNA]</scope>
    <source>
        <strain>M66-2</strain>
    </source>
</reference>
<organism>
    <name type="scientific">Vibrio cholerae serotype O1 (strain M66-2)</name>
    <dbReference type="NCBI Taxonomy" id="579112"/>
    <lineage>
        <taxon>Bacteria</taxon>
        <taxon>Pseudomonadati</taxon>
        <taxon>Pseudomonadota</taxon>
        <taxon>Gammaproteobacteria</taxon>
        <taxon>Vibrionales</taxon>
        <taxon>Vibrionaceae</taxon>
        <taxon>Vibrio</taxon>
    </lineage>
</organism>
<dbReference type="EC" id="1.1.1.267" evidence="1"/>
<dbReference type="EMBL" id="CP001233">
    <property type="protein sequence ID" value="ACP06478.1"/>
    <property type="molecule type" value="Genomic_DNA"/>
</dbReference>
<dbReference type="SMR" id="C3LQ26"/>
<dbReference type="KEGG" id="vcm:VCM66_2177"/>
<dbReference type="HOGENOM" id="CLU_035714_4_0_6"/>
<dbReference type="UniPathway" id="UPA00056">
    <property type="reaction ID" value="UER00092"/>
</dbReference>
<dbReference type="Proteomes" id="UP000001217">
    <property type="component" value="Chromosome I"/>
</dbReference>
<dbReference type="GO" id="GO:0030604">
    <property type="term" value="F:1-deoxy-D-xylulose-5-phosphate reductoisomerase activity"/>
    <property type="evidence" value="ECO:0007669"/>
    <property type="project" value="UniProtKB-UniRule"/>
</dbReference>
<dbReference type="GO" id="GO:0030145">
    <property type="term" value="F:manganese ion binding"/>
    <property type="evidence" value="ECO:0007669"/>
    <property type="project" value="TreeGrafter"/>
</dbReference>
<dbReference type="GO" id="GO:0070402">
    <property type="term" value="F:NADPH binding"/>
    <property type="evidence" value="ECO:0007669"/>
    <property type="project" value="InterPro"/>
</dbReference>
<dbReference type="GO" id="GO:0051484">
    <property type="term" value="P:isopentenyl diphosphate biosynthetic process, methylerythritol 4-phosphate pathway involved in terpenoid biosynthetic process"/>
    <property type="evidence" value="ECO:0007669"/>
    <property type="project" value="TreeGrafter"/>
</dbReference>
<dbReference type="FunFam" id="1.10.1740.10:FF:000004">
    <property type="entry name" value="1-deoxy-D-xylulose 5-phosphate reductoisomerase"/>
    <property type="match status" value="1"/>
</dbReference>
<dbReference type="FunFam" id="3.40.50.720:FF:000045">
    <property type="entry name" value="1-deoxy-D-xylulose 5-phosphate reductoisomerase"/>
    <property type="match status" value="1"/>
</dbReference>
<dbReference type="Gene3D" id="1.10.1740.10">
    <property type="match status" value="1"/>
</dbReference>
<dbReference type="Gene3D" id="3.40.50.720">
    <property type="entry name" value="NAD(P)-binding Rossmann-like Domain"/>
    <property type="match status" value="1"/>
</dbReference>
<dbReference type="HAMAP" id="MF_00183">
    <property type="entry name" value="DXP_reductoisom"/>
    <property type="match status" value="1"/>
</dbReference>
<dbReference type="InterPro" id="IPR003821">
    <property type="entry name" value="DXP_reductoisomerase"/>
</dbReference>
<dbReference type="InterPro" id="IPR013644">
    <property type="entry name" value="DXP_reductoisomerase_C"/>
</dbReference>
<dbReference type="InterPro" id="IPR013512">
    <property type="entry name" value="DXP_reductoisomerase_N"/>
</dbReference>
<dbReference type="InterPro" id="IPR026877">
    <property type="entry name" value="DXPR_C"/>
</dbReference>
<dbReference type="InterPro" id="IPR036169">
    <property type="entry name" value="DXPR_C_sf"/>
</dbReference>
<dbReference type="InterPro" id="IPR036291">
    <property type="entry name" value="NAD(P)-bd_dom_sf"/>
</dbReference>
<dbReference type="NCBIfam" id="TIGR00243">
    <property type="entry name" value="Dxr"/>
    <property type="match status" value="1"/>
</dbReference>
<dbReference type="NCBIfam" id="NF003938">
    <property type="entry name" value="PRK05447.1-1"/>
    <property type="match status" value="1"/>
</dbReference>
<dbReference type="NCBIfam" id="NF009114">
    <property type="entry name" value="PRK12464.1"/>
    <property type="match status" value="1"/>
</dbReference>
<dbReference type="PANTHER" id="PTHR30525">
    <property type="entry name" value="1-DEOXY-D-XYLULOSE 5-PHOSPHATE REDUCTOISOMERASE"/>
    <property type="match status" value="1"/>
</dbReference>
<dbReference type="PANTHER" id="PTHR30525:SF0">
    <property type="entry name" value="1-DEOXY-D-XYLULOSE 5-PHOSPHATE REDUCTOISOMERASE, CHLOROPLASTIC"/>
    <property type="match status" value="1"/>
</dbReference>
<dbReference type="Pfam" id="PF08436">
    <property type="entry name" value="DXP_redisom_C"/>
    <property type="match status" value="1"/>
</dbReference>
<dbReference type="Pfam" id="PF02670">
    <property type="entry name" value="DXP_reductoisom"/>
    <property type="match status" value="1"/>
</dbReference>
<dbReference type="Pfam" id="PF13288">
    <property type="entry name" value="DXPR_C"/>
    <property type="match status" value="1"/>
</dbReference>
<dbReference type="PIRSF" id="PIRSF006205">
    <property type="entry name" value="Dxp_reductismrs"/>
    <property type="match status" value="1"/>
</dbReference>
<dbReference type="SUPFAM" id="SSF69055">
    <property type="entry name" value="1-deoxy-D-xylulose-5-phosphate reductoisomerase, C-terminal domain"/>
    <property type="match status" value="1"/>
</dbReference>
<dbReference type="SUPFAM" id="SSF55347">
    <property type="entry name" value="Glyceraldehyde-3-phosphate dehydrogenase-like, C-terminal domain"/>
    <property type="match status" value="1"/>
</dbReference>
<dbReference type="SUPFAM" id="SSF51735">
    <property type="entry name" value="NAD(P)-binding Rossmann-fold domains"/>
    <property type="match status" value="1"/>
</dbReference>
<proteinExistence type="inferred from homology"/>
<keyword id="KW-0414">Isoprene biosynthesis</keyword>
<keyword id="KW-0464">Manganese</keyword>
<keyword id="KW-0479">Metal-binding</keyword>
<keyword id="KW-0521">NADP</keyword>
<keyword id="KW-0560">Oxidoreductase</keyword>
<protein>
    <recommendedName>
        <fullName evidence="1">1-deoxy-D-xylulose 5-phosphate reductoisomerase</fullName>
        <shortName evidence="1">DXP reductoisomerase</shortName>
        <ecNumber evidence="1">1.1.1.267</ecNumber>
    </recommendedName>
    <alternativeName>
        <fullName evidence="1">1-deoxyxylulose-5-phosphate reductoisomerase</fullName>
    </alternativeName>
    <alternativeName>
        <fullName evidence="1">2-C-methyl-D-erythritol 4-phosphate synthase</fullName>
    </alternativeName>
</protein>
<name>DXR_VIBCM</name>